<organism>
    <name type="scientific">Mus musculus</name>
    <name type="common">Mouse</name>
    <dbReference type="NCBI Taxonomy" id="10090"/>
    <lineage>
        <taxon>Eukaryota</taxon>
        <taxon>Metazoa</taxon>
        <taxon>Chordata</taxon>
        <taxon>Craniata</taxon>
        <taxon>Vertebrata</taxon>
        <taxon>Euteleostomi</taxon>
        <taxon>Mammalia</taxon>
        <taxon>Eutheria</taxon>
        <taxon>Euarchontoglires</taxon>
        <taxon>Glires</taxon>
        <taxon>Rodentia</taxon>
        <taxon>Myomorpha</taxon>
        <taxon>Muroidea</taxon>
        <taxon>Muridae</taxon>
        <taxon>Murinae</taxon>
        <taxon>Mus</taxon>
        <taxon>Mus</taxon>
    </lineage>
</organism>
<name>TENA_MOUSE</name>
<accession>Q80YX1</accession>
<accession>Q64706</accession>
<accession>Q80YX2</accession>
<reference evidence="16 17 20" key="1">
    <citation type="journal article" date="1991" name="Gene">
        <title>Murine tenascin: cDNA cloning, structure and temporal expression of isoforms.</title>
        <authorList>
            <person name="Saga Y."/>
            <person name="Tsukamoto T."/>
            <person name="Jing N."/>
            <person name="Kusakabe M."/>
            <person name="Sakakura T."/>
        </authorList>
    </citation>
    <scope>NUCLEOTIDE SEQUENCE [MRNA] (ISOFORMS 2; 3; 4 AND 5)</scope>
    <scope>TISSUE SPECIFICITY (ISOFORMS 2 AND 5)</scope>
    <scope>DEVELOPMENTAL STAGE (ISOFORMS 2 AND 5)</scope>
    <source>
        <strain evidence="17">GR/J</strain>
        <tissue evidence="12">Mammary tumor</tissue>
    </source>
</reference>
<reference evidence="16 18" key="2">
    <citation type="journal article" date="1991" name="J. Cell Biol.">
        <title>Amino acid sequence of mouse tenascin and differential expression of two tenascin isoforms during embryogenesis.</title>
        <authorList>
            <person name="Weller A."/>
            <person name="Beck S."/>
            <person name="Ekblom P."/>
        </authorList>
    </citation>
    <scope>NUCLEOTIDE SEQUENCE [MRNA] (ISOFORMS 2 AND 5)</scope>
    <scope>DEVELOPMENTAL STAGE (ISOFORMS 2 AND 5)</scope>
    <scope>GLYCOSYLATION</scope>
    <source>
        <strain evidence="18">NMRI X 129</strain>
        <tissue evidence="18">Embryo</tissue>
    </source>
</reference>
<reference key="3">
    <citation type="journal article" date="2009" name="PLoS Biol.">
        <title>Lineage-specific biology revealed by a finished genome assembly of the mouse.</title>
        <authorList>
            <person name="Church D.M."/>
            <person name="Goodstadt L."/>
            <person name="Hillier L.W."/>
            <person name="Zody M.C."/>
            <person name="Goldstein S."/>
            <person name="She X."/>
            <person name="Bult C.J."/>
            <person name="Agarwala R."/>
            <person name="Cherry J.L."/>
            <person name="DiCuccio M."/>
            <person name="Hlavina W."/>
            <person name="Kapustin Y."/>
            <person name="Meric P."/>
            <person name="Maglott D."/>
            <person name="Birtle Z."/>
            <person name="Marques A.C."/>
            <person name="Graves T."/>
            <person name="Zhou S."/>
            <person name="Teague B."/>
            <person name="Potamousis K."/>
            <person name="Churas C."/>
            <person name="Place M."/>
            <person name="Herschleb J."/>
            <person name="Runnheim R."/>
            <person name="Forrest D."/>
            <person name="Amos-Landgraf J."/>
            <person name="Schwartz D.C."/>
            <person name="Cheng Z."/>
            <person name="Lindblad-Toh K."/>
            <person name="Eichler E.E."/>
            <person name="Ponting C.P."/>
        </authorList>
    </citation>
    <scope>NUCLEOTIDE SEQUENCE [LARGE SCALE GENOMIC DNA]</scope>
    <source>
        <strain>C57BL/6J</strain>
    </source>
</reference>
<reference key="4">
    <citation type="journal article" date="2004" name="J. Cell Sci.">
        <title>Murine tenascin-W: a novel mammalian tenascin expressed in kidney and at sites of bone and smooth muscle development.</title>
        <authorList>
            <person name="Scherberich A."/>
            <person name="Tucker R.P."/>
            <person name="Samandari E."/>
            <person name="Brown-Luedi M."/>
            <person name="Martin D."/>
            <person name="Chiquet-Ehrismann R."/>
        </authorList>
    </citation>
    <scope>TISSUE SPECIFICITY</scope>
    <scope>DEVELOPMENTAL STAGE</scope>
</reference>
<reference evidence="16" key="5">
    <citation type="journal article" date="2006" name="Eur. J. Neurosci.">
        <title>Enhanced novelty-induced activity, reduced anxiety, delayed resynchronization to daylight reversal and weaker muscle strength in tenascin-C-deficient mice.</title>
        <authorList>
            <person name="Morellini F."/>
            <person name="Schachner M."/>
        </authorList>
    </citation>
    <scope>FUNCTION</scope>
    <scope>DISRUPTION PHENOTYPE</scope>
</reference>
<reference key="6">
    <citation type="journal article" date="2006" name="J. Proteome Res.">
        <title>Proteome-wide characterization of N-glycosylation events by diagonal chromatography.</title>
        <authorList>
            <person name="Ghesquiere B."/>
            <person name="Van Damme J."/>
            <person name="Martens L."/>
            <person name="Vandekerckhove J."/>
            <person name="Gevaert K."/>
        </authorList>
    </citation>
    <scope>GLYCOSYLATION [LARGE SCALE ANALYSIS] AT ASN-1394</scope>
    <source>
        <strain>C57BL/6J</strain>
        <tissue>Plasma</tissue>
    </source>
</reference>
<reference key="7">
    <citation type="journal article" date="2010" name="Cell">
        <title>A tissue-specific atlas of mouse protein phosphorylation and expression.</title>
        <authorList>
            <person name="Huttlin E.L."/>
            <person name="Jedrychowski M.P."/>
            <person name="Elias J.E."/>
            <person name="Goswami T."/>
            <person name="Rad R."/>
            <person name="Beausoleil S.A."/>
            <person name="Villen J."/>
            <person name="Haas W."/>
            <person name="Sowa M.E."/>
            <person name="Gygi S.P."/>
        </authorList>
    </citation>
    <scope>IDENTIFICATION BY MASS SPECTROMETRY [LARGE SCALE ANALYSIS]</scope>
    <source>
        <tissue>Brain</tissue>
        <tissue>Brown adipose tissue</tissue>
        <tissue>Kidney</tissue>
        <tissue>Liver</tissue>
        <tissue>Lung</tissue>
    </source>
</reference>
<reference key="8">
    <citation type="journal article" date="2012" name="J. Biol. Chem.">
        <title>Polydom/SVEP1 is a ligand for integrin alpha9beta1.</title>
        <authorList>
            <person name="Sato-Nishiuchi R."/>
            <person name="Nakano I."/>
            <person name="Ozawa A."/>
            <person name="Sato Y."/>
            <person name="Takeichi M."/>
            <person name="Kiyozumi D."/>
            <person name="Yamazaki K."/>
            <person name="Yasunaga T."/>
            <person name="Futaki S."/>
            <person name="Sekiguchi K."/>
        </authorList>
    </citation>
    <scope>INTERACTION WITH ITGA9:ITGB1</scope>
    <scope>DEVELOPMENTAL STAGE</scope>
</reference>
<evidence type="ECO:0000250" key="1"/>
<evidence type="ECO:0000250" key="2">
    <source>
        <dbReference type="UniProtKB" id="P24821"/>
    </source>
</evidence>
<evidence type="ECO:0000255" key="3"/>
<evidence type="ECO:0000255" key="4">
    <source>
        <dbReference type="PROSITE-ProRule" id="PRU00076"/>
    </source>
</evidence>
<evidence type="ECO:0000255" key="5">
    <source>
        <dbReference type="PROSITE-ProRule" id="PRU00316"/>
    </source>
</evidence>
<evidence type="ECO:0000255" key="6">
    <source>
        <dbReference type="PROSITE-ProRule" id="PRU00739"/>
    </source>
</evidence>
<evidence type="ECO:0000256" key="7">
    <source>
        <dbReference type="SAM" id="MobiDB-lite"/>
    </source>
</evidence>
<evidence type="ECO:0000269" key="8">
    <source>
    </source>
</evidence>
<evidence type="ECO:0000269" key="9">
    <source>
    </source>
</evidence>
<evidence type="ECO:0000269" key="10">
    <source>
    </source>
</evidence>
<evidence type="ECO:0000269" key="11">
    <source>
    </source>
</evidence>
<evidence type="ECO:0000269" key="12">
    <source>
    </source>
</evidence>
<evidence type="ECO:0000269" key="13">
    <source>
    </source>
</evidence>
<evidence type="ECO:0000303" key="14">
    <source>
    </source>
</evidence>
<evidence type="ECO:0000303" key="15">
    <source>
    </source>
</evidence>
<evidence type="ECO:0000305" key="16"/>
<evidence type="ECO:0000312" key="17">
    <source>
        <dbReference type="EMBL" id="BAA14355.1"/>
    </source>
</evidence>
<evidence type="ECO:0000312" key="18">
    <source>
        <dbReference type="EMBL" id="CAA39751.1"/>
    </source>
</evidence>
<evidence type="ECO:0000312" key="19">
    <source>
        <dbReference type="MGI" id="MGI:101922"/>
    </source>
</evidence>
<evidence type="ECO:0000312" key="20">
    <source>
        <dbReference type="PIR" id="JQ1322"/>
    </source>
</evidence>
<sequence>MGAVTWLLPGIFLALFALTPEGGVLKKIIRHKRESGLNMTLPEENQPVVFNHIYNIKLPMGSQCSVDLESASGEKDLTPTPESSGSFQEHTVDGENQIVFTHRINIPRRACGCAAAPDVKELLSRLEELELLVSSLREQCTMGTGCCLQPAEGRLDTRPFCSGRGNFSAEGCGCVCEPGWKGPNCSEPDCPGNCNLRGQCLDGQCICDEGFTGEDCSQLACPNDCNDQGRCVNGVCVCFEGYAGPDCGLEVCPVPCSEEHGMCVDGRCVCKDGFAGEDCNEPLCLNNCYNRGRCVENECVCDEGFTGEDCSELICPNDCFDRGRCINGTCYCEEGFTGEDCGELTCPNDCQGRGQCEEGQCVCNEGFAGADCSEKRCPADCHHRGRCLNGQCECDDGFTGADCGDLQCPNGCSGHGRCVNGQCVCDEGYTGEDCSQRRCPNDCHNRGLCVQGKCICEQGFKGFDCSEMSCPNDCHQHGRCVNGMCICDDDYTGEDCRDRRCPRDCSQRGRCVDGQCICEDGFTGPDCAELSCPSDCHGHGRCVNGQCICHEGFTGKDCKEQRCPSDCHGQGRCEDGQCICHEGFTGLDCGQRSCPNDCSNQGQCVSGRCICNEGYTGIDCSEVSPPKDLIVTEVTEETVNLAWDNEMRVTEYLIMYTPTHADGLEMQFRVPGDQTSTTIRELEPGVEYFIRVFAILENKRSIPVSARVATYLPAPEGLKFKSIKETSVEVEWDPLDIAFETWEIIFRNMNKEDEGEITKSLRRPETSYRQTGLAPGQEYEISLHIVKNNTRGPGLKKVTTTRLDAPSHIEVKDVTDTTALITWFKPLAEIDSIELSYGIKDVPGDRTTIDLTHEDNQYSIGNLRPDTEYEVSLISRRVDMASNPAKETFITGLDAPRNLRRVSQTDNSITLEWRNVKADIDSYRIKYAPISGGDHAEIDVPKSQQATTKTTLTGLRPGTEYGIGVSAVKGDKESDPATINAATEIDAPKDLRVSETTQDSLTFFWTTPLAKFDRYRLNYSLPTGQSMEVQLPKDATSHVLTDLEPGQEYTVLLIAEKGRHKSKPARVKASTEEVPSLENLTVTEAGWDGLRLNWTADDLAYEYFVIQVQEANNVETAHNFTVPGNLRAADIPGLKVATSYRVSIYGVARGYRTPVLSAETSTGTTPNLGEVTVAEVGWDALTLNWTAPEGAYKNFFIQVLEADTTQTVQNLTVPGGLRSVDLPGLKAATRYYITLRGVTQDFGTAPLSVEVLTEDLPQLGGLSVTEVSWDGLTLNWTTDDLAYKHFVVQVQEANNVEAAQNLTVPGSLRAVDIPGLKADTPYRVSIYGVIQGYRTPMLSTDVSTAREPEIGNLNVSDVTPKSFNLSWTATDGIFDMFTIEIIDSNRLLQTAEHNISGAERTAHISGLPPSTDFIVYLSGIAPSIRTKTISTTATTEALPLLENLTISDTNPYGFTVSWTASENAFDSFLVTVVDSGKLLDPQEFTLSGTQRKLELRGLITGIGYEVLVSGFTQGHQTKPLRAETITEAEPEVDNLLVSDATPDGFRLSWTADEGIFDSFVIRIRDTKKQSEPQEISLPSPERTRDITGLREATEYEIELYGISRGRRSQPVSAIATTAMGSPKEIMFSDITENAATVSWRAPTAQVESFRITYVPMTGGAPSMVTVDGTDTETRLVKLTPGVEYRVSVIAMKGFEESDPVSGTLITALDGPSGLLIANITDSEALAMWQPAIATVDSYVISYTGERVPEVTRTVSGNTVEYELHDLEPATEYILSIFAEKGQQKSSTIATKFTTDLDSPREFTATEVQSETALLTWRPPRASVTGYLLVYESVDGTVKEVIVGPDTTSYSLADLSPSTHYSARIQALSGSLRSKLIQTIFTTIGLLYPFPRDCSQAMLNGDTTSGLYTIYINGDKTQALEVYCDMTSDGGGWIVFLRRKNGREDFYRNWKAYAAGFGDRREEFWLGLDNLSKITAQGQYELRVDLQDHGESAYAVYDRFSVGDAKSRYKLKVEGYSGTAGDSMNYHNGRSFSTYDKDTDSAITNCALSYKGAFWYKNCHRVNLMGRYGDNNHSQGVNWFHWKGHEYSIQFAEMKLRPSNFRNLEGRRKRA</sequence>
<proteinExistence type="evidence at protein level"/>
<comment type="function">
    <text evidence="2 9">Extracellular matrix protein implicated in guidance of migrating neurons as well as axons during development, synaptic plasticity as well as neuronal regeneration. Promotes neurite outgrowth when provided to neurons in culture. May play a role in supporting the growth of epithelial tumors. Ligand for integrins ITGA8:ITGB1, ITGA9:ITGB1, ITGAV:ITGB3 and ITGAV:ITGB6. In tumors, stimulates angiogenesis by elongation, migration and sprouting of endothelial cells (By similarity).</text>
</comment>
<comment type="subunit">
    <text evidence="2 13">Homohexamer; disulfide-linked. A homotrimer may be formed in the triple coiled-coil region and may be stabilized by disulfide rings at both ends. Two of such half-hexabrachions may be disulfide linked within the central globule. Interacts with CSPG4 (By similarity). Interacts (via the 3rd fibronectin type-III domain) with integrin ITGA9:ITGB1 (PubMed:22654117).</text>
</comment>
<comment type="subcellular location">
    <subcellularLocation>
        <location evidence="1">Secreted</location>
        <location evidence="1">Extracellular space</location>
        <location evidence="1">Extracellular matrix</location>
    </subcellularLocation>
</comment>
<comment type="alternative products">
    <event type="alternative splicing"/>
    <isoform>
        <id>Q80YX1-1</id>
        <name>1</name>
        <sequence type="displayed"/>
    </isoform>
    <isoform>
        <id>Q80YX1-2</id>
        <name evidence="12">2</name>
        <sequence type="described" ref="VSP_052147"/>
    </isoform>
    <isoform>
        <id>Q80YX1-3</id>
        <name evidence="12">3</name>
        <sequence type="described" ref="VSP_052146"/>
    </isoform>
    <isoform>
        <id>Q80YX1-4</id>
        <name evidence="12">4</name>
        <sequence type="described" ref="VSP_052145"/>
    </isoform>
    <isoform>
        <id>Q80YX1-5</id>
        <name evidence="12">5</name>
        <sequence type="described" ref="VSP_052144"/>
    </isoform>
</comment>
<comment type="tissue specificity">
    <text evidence="8">Expressed in the corneal limbus, the periosteum and the rib molecular layer of the cerebellum, the matrix of kidney tubules, blood vessels, stomach and intestine (at protein level).</text>
</comment>
<comment type="tissue specificity">
    <molecule>Isoform 2</molecule>
    <text evidence="12">Weakly expressed in the brain.</text>
</comment>
<comment type="tissue specificity">
    <molecule>Isoform 5</molecule>
    <text evidence="12">Highly expressed in the thymus and moderately expressed in the brain.</text>
</comment>
<comment type="developmental stage">
    <text evidence="8 13">At 11.5 dpc, expressed in maxillary process (at protein level) (PubMed:14709716). Expressed in the stomach and periosteum of the ribs at 14.5 and 15.5 dpc (at protein level) (PubMed:14709716). Expressed in developing bones such as the mandible, palate and teeth at 16.5 dpc (at protein level) (PubMed:14709716). Expressed in the smooth muscle layer of the stomach and mesenchyme of the lung at 16.5 dpc (at protein level) (PubMed:22654117).</text>
</comment>
<comment type="developmental stage">
    <molecule>Isoform 2</molecule>
    <text evidence="11 12">Expressed in the intestine at 13 dpc (PubMed:1703162). Expressed in the cerebrum, cerebellum and stomach at 17 dpc and at 6 days of age (PubMed:1717349). Expression spreads to the duodenum, ileum, colon, bladder and skeletal muscle at 6 days of age (PubMed:1717349). Expressed in the kidney at birth (PubMed:1703162).</text>
</comment>
<comment type="developmental stage">
    <molecule>Isoform 5</molecule>
    <text evidence="11 12">Expressed in the cerebellum at 17 dpc, expression is decreased at 6 days of age (PubMed:1717349). Expressed in the thymus, stomach and weakly in skeletal muscle at 17 dpc (PubMed:1717349). Expressed in the intestine at birth (PubMed:1703162). Expressed in the thymus, stomach, duodenum, ileum, colon, bladder and skeletal muscle at 6 days of age (PubMed:1717349). Expressed in the kidney at 2 weeks of age (PubMed:1703162). Expressed in the thymus and colon at 32 days of age (PubMed:1717349).</text>
</comment>
<comment type="PTM">
    <text evidence="10 11">N-glycosylated.</text>
</comment>
<comment type="disruption phenotype">
    <text evidence="9">Mice show enhanced novelty-induced activity, reduced anxiety, delayed resynchronization to daylight reversal and weaker muscle strength.</text>
</comment>
<comment type="similarity">
    <text evidence="3">Belongs to the tenascin family.</text>
</comment>
<dbReference type="EMBL" id="D90343">
    <property type="protein sequence ID" value="BAA14355.1"/>
    <property type="molecule type" value="mRNA"/>
</dbReference>
<dbReference type="EMBL" id="X56304">
    <property type="protein sequence ID" value="CAA39751.1"/>
    <property type="molecule type" value="mRNA"/>
</dbReference>
<dbReference type="EMBL" id="AL732556">
    <property type="status" value="NOT_ANNOTATED_CDS"/>
    <property type="molecule type" value="Genomic_DNA"/>
</dbReference>
<dbReference type="CCDS" id="CCDS18265.1">
    <molecule id="Q80YX1-2"/>
</dbReference>
<dbReference type="CCDS" id="CCDS89763.1">
    <molecule id="Q80YX1-1"/>
</dbReference>
<dbReference type="PIR" id="JQ1322">
    <property type="entry name" value="JQ1322"/>
</dbReference>
<dbReference type="RefSeq" id="NP_001356140.1">
    <molecule id="Q80YX1-1"/>
    <property type="nucleotide sequence ID" value="NM_001369211.1"/>
</dbReference>
<dbReference type="RefSeq" id="NP_035737.2">
    <molecule id="Q80YX1-2"/>
    <property type="nucleotide sequence ID" value="NM_011607.3"/>
</dbReference>
<dbReference type="RefSeq" id="XP_006537837.1">
    <property type="nucleotide sequence ID" value="XM_006537774.1"/>
</dbReference>
<dbReference type="SMR" id="Q80YX1"/>
<dbReference type="BioGRID" id="204237">
    <property type="interactions" value="10"/>
</dbReference>
<dbReference type="ComplexPortal" id="CPX-471">
    <property type="entry name" value="Tenascin-C complex"/>
</dbReference>
<dbReference type="FunCoup" id="Q80YX1">
    <property type="interactions" value="580"/>
</dbReference>
<dbReference type="STRING" id="10090.ENSMUSP00000103000"/>
<dbReference type="GlyConnect" id="2754">
    <property type="glycosylation" value="3 N-Linked glycans (3 sites)"/>
</dbReference>
<dbReference type="GlyCosmos" id="Q80YX1">
    <property type="glycosylation" value="20 sites, 3 glycans"/>
</dbReference>
<dbReference type="GlyGen" id="Q80YX1">
    <property type="glycosylation" value="23 sites, 12 N-linked glycans (9 sites), 1 O-linked glycan (1 site)"/>
</dbReference>
<dbReference type="iPTMnet" id="Q80YX1"/>
<dbReference type="PhosphoSitePlus" id="Q80YX1"/>
<dbReference type="SwissPalm" id="Q80YX1"/>
<dbReference type="CPTAC" id="non-CPTAC-3359"/>
<dbReference type="jPOST" id="Q80YX1"/>
<dbReference type="PaxDb" id="10090-ENSMUSP00000102995"/>
<dbReference type="PeptideAtlas" id="Q80YX1"/>
<dbReference type="ProteomicsDB" id="263268">
    <molecule id="Q80YX1-1"/>
</dbReference>
<dbReference type="ProteomicsDB" id="263269">
    <molecule id="Q80YX1-2"/>
</dbReference>
<dbReference type="ProteomicsDB" id="263270">
    <molecule id="Q80YX1-3"/>
</dbReference>
<dbReference type="ProteomicsDB" id="263271">
    <molecule id="Q80YX1-4"/>
</dbReference>
<dbReference type="ProteomicsDB" id="263272">
    <molecule id="Q80YX1-5"/>
</dbReference>
<dbReference type="Pumba" id="Q80YX1"/>
<dbReference type="ABCD" id="Q80YX1">
    <property type="antibodies" value="15 sequenced antibodies"/>
</dbReference>
<dbReference type="Antibodypedia" id="1348">
    <property type="antibodies" value="1049 antibodies from 43 providers"/>
</dbReference>
<dbReference type="DNASU" id="21923"/>
<dbReference type="Ensembl" id="ENSMUST00000030056.12">
    <molecule id="Q80YX1-2"/>
    <property type="protein sequence ID" value="ENSMUSP00000030056.6"/>
    <property type="gene ID" value="ENSMUSG00000028364.16"/>
</dbReference>
<dbReference type="Ensembl" id="ENSMUST00000107372.8">
    <molecule id="Q80YX1-1"/>
    <property type="protein sequence ID" value="ENSMUSP00000102995.2"/>
    <property type="gene ID" value="ENSMUSG00000028364.16"/>
</dbReference>
<dbReference type="Ensembl" id="ENSMUST00000107377.10">
    <molecule id="Q80YX1-2"/>
    <property type="protein sequence ID" value="ENSMUSP00000103000.4"/>
    <property type="gene ID" value="ENSMUSG00000028364.16"/>
</dbReference>
<dbReference type="GeneID" id="21923"/>
<dbReference type="KEGG" id="mmu:21923"/>
<dbReference type="UCSC" id="uc008thg.2">
    <molecule id="Q80YX1-2"/>
    <property type="organism name" value="mouse"/>
</dbReference>
<dbReference type="AGR" id="MGI:101922"/>
<dbReference type="CTD" id="3371"/>
<dbReference type="MGI" id="MGI:101922">
    <property type="gene designation" value="Tnc"/>
</dbReference>
<dbReference type="VEuPathDB" id="HostDB:ENSMUSG00000028364"/>
<dbReference type="eggNOG" id="KOG1225">
    <property type="taxonomic scope" value="Eukaryota"/>
</dbReference>
<dbReference type="eggNOG" id="KOG2579">
    <property type="taxonomic scope" value="Eukaryota"/>
</dbReference>
<dbReference type="GeneTree" id="ENSGT00940000155188"/>
<dbReference type="HOGENOM" id="CLU_001162_1_1_1"/>
<dbReference type="InParanoid" id="Q80YX1"/>
<dbReference type="OMA" id="HHNGRCE"/>
<dbReference type="OrthoDB" id="442731at2759"/>
<dbReference type="PhylomeDB" id="Q80YX1"/>
<dbReference type="TreeFam" id="TF329915"/>
<dbReference type="Reactome" id="R-MMU-216083">
    <property type="pathway name" value="Integrin cell surface interactions"/>
</dbReference>
<dbReference type="Reactome" id="R-MMU-3000178">
    <property type="pathway name" value="ECM proteoglycans"/>
</dbReference>
<dbReference type="Reactome" id="R-MMU-381426">
    <property type="pathway name" value="Regulation of Insulin-like Growth Factor (IGF) transport and uptake by Insulin-like Growth Factor Binding Proteins (IGFBPs)"/>
</dbReference>
<dbReference type="Reactome" id="R-MMU-8957275">
    <property type="pathway name" value="Post-translational protein phosphorylation"/>
</dbReference>
<dbReference type="BioGRID-ORCS" id="21923">
    <property type="hits" value="1 hit in 62 CRISPR screens"/>
</dbReference>
<dbReference type="ChiTaRS" id="Tnc">
    <property type="organism name" value="mouse"/>
</dbReference>
<dbReference type="PRO" id="PR:Q80YX1"/>
<dbReference type="Proteomes" id="UP000000589">
    <property type="component" value="Chromosome 4"/>
</dbReference>
<dbReference type="RNAct" id="Q80YX1">
    <property type="molecule type" value="protein"/>
</dbReference>
<dbReference type="Bgee" id="ENSMUSG00000028364">
    <property type="expression patterns" value="Expressed in diaphysis of femur and 244 other cell types or tissues"/>
</dbReference>
<dbReference type="ExpressionAtlas" id="Q80YX1">
    <property type="expression patterns" value="baseline and differential"/>
</dbReference>
<dbReference type="GO" id="GO:0005604">
    <property type="term" value="C:basement membrane"/>
    <property type="evidence" value="ECO:0000314"/>
    <property type="project" value="ComplexPortal"/>
</dbReference>
<dbReference type="GO" id="GO:0062023">
    <property type="term" value="C:collagen-containing extracellular matrix"/>
    <property type="evidence" value="ECO:0007005"/>
    <property type="project" value="UniProtKB"/>
</dbReference>
<dbReference type="GO" id="GO:0098965">
    <property type="term" value="C:extracellular matrix of synaptic cleft"/>
    <property type="evidence" value="ECO:0007669"/>
    <property type="project" value="Ensembl"/>
</dbReference>
<dbReference type="GO" id="GO:0005576">
    <property type="term" value="C:extracellular region"/>
    <property type="evidence" value="ECO:0000314"/>
    <property type="project" value="MGI"/>
</dbReference>
<dbReference type="GO" id="GO:0098978">
    <property type="term" value="C:glutamatergic synapse"/>
    <property type="evidence" value="ECO:0007669"/>
    <property type="project" value="Ensembl"/>
</dbReference>
<dbReference type="GO" id="GO:0005614">
    <property type="term" value="C:interstitial matrix"/>
    <property type="evidence" value="ECO:0000314"/>
    <property type="project" value="MGI"/>
</dbReference>
<dbReference type="GO" id="GO:0098966">
    <property type="term" value="C:perisynaptic extracellular matrix"/>
    <property type="evidence" value="ECO:0000314"/>
    <property type="project" value="SynGO"/>
</dbReference>
<dbReference type="GO" id="GO:0090733">
    <property type="term" value="C:tenascin complex"/>
    <property type="evidence" value="ECO:0000353"/>
    <property type="project" value="ComplexPortal"/>
</dbReference>
<dbReference type="GO" id="GO:0001968">
    <property type="term" value="F:fibronectin binding"/>
    <property type="evidence" value="ECO:0000266"/>
    <property type="project" value="MGI"/>
</dbReference>
<dbReference type="GO" id="GO:0005178">
    <property type="term" value="F:integrin binding"/>
    <property type="evidence" value="ECO:0000250"/>
    <property type="project" value="UniProtKB"/>
</dbReference>
<dbReference type="GO" id="GO:0045545">
    <property type="term" value="F:syndecan binding"/>
    <property type="evidence" value="ECO:0000266"/>
    <property type="project" value="MGI"/>
</dbReference>
<dbReference type="GO" id="GO:0060447">
    <property type="term" value="P:bud outgrowth involved in lung branching"/>
    <property type="evidence" value="ECO:0007669"/>
    <property type="project" value="Ensembl"/>
</dbReference>
<dbReference type="GO" id="GO:0007155">
    <property type="term" value="P:cell adhesion"/>
    <property type="evidence" value="ECO:0007669"/>
    <property type="project" value="UniProtKB-KW"/>
</dbReference>
<dbReference type="GO" id="GO:0071799">
    <property type="term" value="P:cellular response to prostaglandin D stimulus"/>
    <property type="evidence" value="ECO:0007669"/>
    <property type="project" value="Ensembl"/>
</dbReference>
<dbReference type="GO" id="GO:0071300">
    <property type="term" value="P:cellular response to retinoic acid"/>
    <property type="evidence" value="ECO:0007669"/>
    <property type="project" value="Ensembl"/>
</dbReference>
<dbReference type="GO" id="GO:0071305">
    <property type="term" value="P:cellular response to vitamin D"/>
    <property type="evidence" value="ECO:0007669"/>
    <property type="project" value="Ensembl"/>
</dbReference>
<dbReference type="GO" id="GO:0060739">
    <property type="term" value="P:mesenchymal-epithelial cell signaling involved in prostate gland development"/>
    <property type="evidence" value="ECO:0000315"/>
    <property type="project" value="MGI"/>
</dbReference>
<dbReference type="GO" id="GO:0002009">
    <property type="term" value="P:morphogenesis of an epithelium"/>
    <property type="evidence" value="ECO:0000315"/>
    <property type="project" value="ComplexPortal"/>
</dbReference>
<dbReference type="GO" id="GO:0007162">
    <property type="term" value="P:negative regulation of cell adhesion"/>
    <property type="evidence" value="ECO:0007669"/>
    <property type="project" value="Ensembl"/>
</dbReference>
<dbReference type="GO" id="GO:0007528">
    <property type="term" value="P:neuromuscular junction development"/>
    <property type="evidence" value="ECO:0000315"/>
    <property type="project" value="ComplexPortal"/>
</dbReference>
<dbReference type="GO" id="GO:0042475">
    <property type="term" value="P:odontogenesis of dentin-containing tooth"/>
    <property type="evidence" value="ECO:0007669"/>
    <property type="project" value="Ensembl"/>
</dbReference>
<dbReference type="GO" id="GO:0014012">
    <property type="term" value="P:peripheral nervous system axon regeneration"/>
    <property type="evidence" value="ECO:0000315"/>
    <property type="project" value="ComplexPortal"/>
</dbReference>
<dbReference type="GO" id="GO:0008284">
    <property type="term" value="P:positive regulation of cell population proliferation"/>
    <property type="evidence" value="ECO:0000314"/>
    <property type="project" value="MGI"/>
</dbReference>
<dbReference type="GO" id="GO:0010628">
    <property type="term" value="P:positive regulation of gene expression"/>
    <property type="evidence" value="ECO:0000314"/>
    <property type="project" value="MGI"/>
</dbReference>
<dbReference type="GO" id="GO:0060740">
    <property type="term" value="P:prostate gland epithelium morphogenesis"/>
    <property type="evidence" value="ECO:0000315"/>
    <property type="project" value="MGI"/>
</dbReference>
<dbReference type="GO" id="GO:0030155">
    <property type="term" value="P:regulation of cell adhesion"/>
    <property type="evidence" value="ECO:0000266"/>
    <property type="project" value="ComplexPortal"/>
</dbReference>
<dbReference type="GO" id="GO:0001558">
    <property type="term" value="P:regulation of cell growth"/>
    <property type="evidence" value="ECO:0000266"/>
    <property type="project" value="ComplexPortal"/>
</dbReference>
<dbReference type="GO" id="GO:0030334">
    <property type="term" value="P:regulation of cell migration"/>
    <property type="evidence" value="ECO:0000303"/>
    <property type="project" value="ComplexPortal"/>
</dbReference>
<dbReference type="GO" id="GO:0050727">
    <property type="term" value="P:regulation of inflammatory response"/>
    <property type="evidence" value="ECO:0000315"/>
    <property type="project" value="ComplexPortal"/>
</dbReference>
<dbReference type="GO" id="GO:0045471">
    <property type="term" value="P:response to ethanol"/>
    <property type="evidence" value="ECO:0007669"/>
    <property type="project" value="Ensembl"/>
</dbReference>
<dbReference type="GO" id="GO:0071774">
    <property type="term" value="P:response to fibroblast growth factor"/>
    <property type="evidence" value="ECO:0007669"/>
    <property type="project" value="Ensembl"/>
</dbReference>
<dbReference type="GO" id="GO:0009612">
    <property type="term" value="P:response to mechanical stimulus"/>
    <property type="evidence" value="ECO:0007669"/>
    <property type="project" value="Ensembl"/>
</dbReference>
<dbReference type="GO" id="GO:0009611">
    <property type="term" value="P:response to wounding"/>
    <property type="evidence" value="ECO:0000266"/>
    <property type="project" value="ComplexPortal"/>
</dbReference>
<dbReference type="CDD" id="cd00054">
    <property type="entry name" value="EGF_CA"/>
    <property type="match status" value="2"/>
</dbReference>
<dbReference type="CDD" id="cd00063">
    <property type="entry name" value="FN3"/>
    <property type="match status" value="14"/>
</dbReference>
<dbReference type="CDD" id="cd00087">
    <property type="entry name" value="FReD"/>
    <property type="match status" value="1"/>
</dbReference>
<dbReference type="FunFam" id="2.60.40.10:FF:000099">
    <property type="entry name" value="Fibronectin 1"/>
    <property type="match status" value="1"/>
</dbReference>
<dbReference type="FunFam" id="2.10.25.10:FF:000001">
    <property type="entry name" value="Tenascin C"/>
    <property type="match status" value="14"/>
</dbReference>
<dbReference type="FunFam" id="2.20.25.10:FF:000006">
    <property type="entry name" value="Tenascin C"/>
    <property type="match status" value="1"/>
</dbReference>
<dbReference type="FunFam" id="2.60.40.10:FF:000162">
    <property type="entry name" value="Tenascin C"/>
    <property type="match status" value="1"/>
</dbReference>
<dbReference type="FunFam" id="2.60.40.10:FF:000201">
    <property type="entry name" value="Tenascin C"/>
    <property type="match status" value="1"/>
</dbReference>
<dbReference type="FunFam" id="2.60.40.10:FF:000207">
    <property type="entry name" value="Tenascin C"/>
    <property type="match status" value="1"/>
</dbReference>
<dbReference type="FunFam" id="2.60.40.10:FF:000274">
    <property type="entry name" value="Tenascin C"/>
    <property type="match status" value="1"/>
</dbReference>
<dbReference type="FunFam" id="2.60.40.10:FF:000293">
    <property type="entry name" value="Tenascin C"/>
    <property type="match status" value="1"/>
</dbReference>
<dbReference type="FunFam" id="2.60.40.10:FF:000346">
    <property type="entry name" value="Tenascin C"/>
    <property type="match status" value="2"/>
</dbReference>
<dbReference type="FunFam" id="2.60.40.10:FF:000398">
    <property type="entry name" value="Tenascin C"/>
    <property type="match status" value="1"/>
</dbReference>
<dbReference type="FunFam" id="2.60.40.10:FF:000529">
    <property type="entry name" value="Tenascin C"/>
    <property type="match status" value="1"/>
</dbReference>
<dbReference type="FunFam" id="2.60.40.10:FF:000610">
    <property type="entry name" value="Tenascin C"/>
    <property type="match status" value="1"/>
</dbReference>
<dbReference type="FunFam" id="2.60.40.10:FF:000611">
    <property type="entry name" value="Tenascin C"/>
    <property type="match status" value="1"/>
</dbReference>
<dbReference type="FunFam" id="2.60.40.10:FF:000939">
    <property type="entry name" value="Tenascin C"/>
    <property type="match status" value="1"/>
</dbReference>
<dbReference type="FunFam" id="3.90.215.10:FF:000001">
    <property type="entry name" value="Tenascin isoform 1"/>
    <property type="match status" value="1"/>
</dbReference>
<dbReference type="Gene3D" id="2.20.25.10">
    <property type="match status" value="1"/>
</dbReference>
<dbReference type="Gene3D" id="3.90.215.10">
    <property type="entry name" value="Gamma Fibrinogen, chain A, domain 1"/>
    <property type="match status" value="1"/>
</dbReference>
<dbReference type="Gene3D" id="2.60.40.10">
    <property type="entry name" value="Immunoglobulins"/>
    <property type="match status" value="14"/>
</dbReference>
<dbReference type="Gene3D" id="2.10.25.10">
    <property type="entry name" value="Laminin"/>
    <property type="match status" value="14"/>
</dbReference>
<dbReference type="InterPro" id="IPR050991">
    <property type="entry name" value="ECM_Regulatory_Proteins"/>
</dbReference>
<dbReference type="InterPro" id="IPR000742">
    <property type="entry name" value="EGF-like_dom"/>
</dbReference>
<dbReference type="InterPro" id="IPR041161">
    <property type="entry name" value="EGF_Tenascin"/>
</dbReference>
<dbReference type="InterPro" id="IPR036056">
    <property type="entry name" value="Fibrinogen-like_C"/>
</dbReference>
<dbReference type="InterPro" id="IPR014716">
    <property type="entry name" value="Fibrinogen_a/b/g_C_1"/>
</dbReference>
<dbReference type="InterPro" id="IPR002181">
    <property type="entry name" value="Fibrinogen_a/b/g_C_dom"/>
</dbReference>
<dbReference type="InterPro" id="IPR003961">
    <property type="entry name" value="FN3_dom"/>
</dbReference>
<dbReference type="InterPro" id="IPR036116">
    <property type="entry name" value="FN3_sf"/>
</dbReference>
<dbReference type="InterPro" id="IPR013783">
    <property type="entry name" value="Ig-like_fold"/>
</dbReference>
<dbReference type="NCBIfam" id="NF040941">
    <property type="entry name" value="GGGWT_bact"/>
    <property type="match status" value="1"/>
</dbReference>
<dbReference type="PANTHER" id="PTHR46708">
    <property type="entry name" value="TENASCIN"/>
    <property type="match status" value="1"/>
</dbReference>
<dbReference type="PANTHER" id="PTHR46708:SF1">
    <property type="entry name" value="TENASCIN"/>
    <property type="match status" value="1"/>
</dbReference>
<dbReference type="Pfam" id="PF25024">
    <property type="entry name" value="EGF_TEN"/>
    <property type="match status" value="1"/>
</dbReference>
<dbReference type="Pfam" id="PF18720">
    <property type="entry name" value="EGF_Tenascin"/>
    <property type="match status" value="1"/>
</dbReference>
<dbReference type="Pfam" id="PF23106">
    <property type="entry name" value="EGF_Teneurin"/>
    <property type="match status" value="5"/>
</dbReference>
<dbReference type="Pfam" id="PF00147">
    <property type="entry name" value="Fibrinogen_C"/>
    <property type="match status" value="1"/>
</dbReference>
<dbReference type="Pfam" id="PF00041">
    <property type="entry name" value="fn3"/>
    <property type="match status" value="14"/>
</dbReference>
<dbReference type="SMART" id="SM00181">
    <property type="entry name" value="EGF"/>
    <property type="match status" value="14"/>
</dbReference>
<dbReference type="SMART" id="SM00186">
    <property type="entry name" value="FBG"/>
    <property type="match status" value="1"/>
</dbReference>
<dbReference type="SMART" id="SM00060">
    <property type="entry name" value="FN3"/>
    <property type="match status" value="14"/>
</dbReference>
<dbReference type="SUPFAM" id="SSF56496">
    <property type="entry name" value="Fibrinogen C-terminal domain-like"/>
    <property type="match status" value="1"/>
</dbReference>
<dbReference type="SUPFAM" id="SSF49265">
    <property type="entry name" value="Fibronectin type III"/>
    <property type="match status" value="11"/>
</dbReference>
<dbReference type="PROSITE" id="PS00022">
    <property type="entry name" value="EGF_1"/>
    <property type="match status" value="15"/>
</dbReference>
<dbReference type="PROSITE" id="PS01186">
    <property type="entry name" value="EGF_2"/>
    <property type="match status" value="14"/>
</dbReference>
<dbReference type="PROSITE" id="PS50026">
    <property type="entry name" value="EGF_3"/>
    <property type="match status" value="5"/>
</dbReference>
<dbReference type="PROSITE" id="PS51406">
    <property type="entry name" value="FIBRINOGEN_C_2"/>
    <property type="match status" value="1"/>
</dbReference>
<dbReference type="PROSITE" id="PS50853">
    <property type="entry name" value="FN3"/>
    <property type="match status" value="14"/>
</dbReference>
<gene>
    <name evidence="19" type="primary">Tnc</name>
    <name evidence="19" type="synonym">Hxb</name>
</gene>
<feature type="signal peptide" evidence="2">
    <location>
        <begin position="1"/>
        <end position="22"/>
    </location>
</feature>
<feature type="chain" id="PRO_0000248607" description="Tenascin" evidence="2">
    <location>
        <begin position="23"/>
        <end position="2110"/>
    </location>
</feature>
<feature type="domain" description="EGF-like 1; incomplete" evidence="4">
    <location>
        <begin position="174"/>
        <end position="185"/>
    </location>
</feature>
<feature type="domain" description="EGF-like 2" evidence="4">
    <location>
        <begin position="186"/>
        <end position="216"/>
    </location>
</feature>
<feature type="domain" description="EGF-like 3" evidence="4">
    <location>
        <begin position="217"/>
        <end position="247"/>
    </location>
</feature>
<feature type="domain" description="EGF-like 4" evidence="4">
    <location>
        <begin position="248"/>
        <end position="279"/>
    </location>
</feature>
<feature type="domain" description="EGF-like 5" evidence="4">
    <location>
        <begin position="280"/>
        <end position="310"/>
    </location>
</feature>
<feature type="domain" description="EGF-like 6" evidence="4">
    <location>
        <begin position="311"/>
        <end position="341"/>
    </location>
</feature>
<feature type="domain" description="EGF-like 7" evidence="4">
    <location>
        <begin position="342"/>
        <end position="372"/>
    </location>
</feature>
<feature type="domain" description="EGF-like 8" evidence="4">
    <location>
        <begin position="373"/>
        <end position="403"/>
    </location>
</feature>
<feature type="domain" description="EGF-like 9" evidence="4">
    <location>
        <begin position="404"/>
        <end position="434"/>
    </location>
</feature>
<feature type="domain" description="EGF-like 10" evidence="4">
    <location>
        <begin position="435"/>
        <end position="465"/>
    </location>
</feature>
<feature type="domain" description="EGF-like 11" evidence="4">
    <location>
        <begin position="466"/>
        <end position="496"/>
    </location>
</feature>
<feature type="domain" description="EGF-like 12" evidence="4">
    <location>
        <begin position="497"/>
        <end position="527"/>
    </location>
</feature>
<feature type="domain" description="EGF-like 13" evidence="4">
    <location>
        <begin position="528"/>
        <end position="558"/>
    </location>
</feature>
<feature type="domain" description="EGF-like 14" evidence="4">
    <location>
        <begin position="559"/>
        <end position="589"/>
    </location>
</feature>
<feature type="domain" description="EGF-like 15" evidence="4">
    <location>
        <begin position="590"/>
        <end position="621"/>
    </location>
</feature>
<feature type="domain" description="Fibronectin type-III 1" evidence="5">
    <location>
        <begin position="625"/>
        <end position="715"/>
    </location>
</feature>
<feature type="domain" description="Fibronectin type-III 2" evidence="5">
    <location>
        <begin position="716"/>
        <end position="804"/>
    </location>
</feature>
<feature type="domain" description="Fibronectin type-III 3" evidence="5">
    <location>
        <begin position="805"/>
        <end position="894"/>
    </location>
</feature>
<feature type="domain" description="Fibronectin type-III 4" evidence="5">
    <location>
        <begin position="895"/>
        <end position="988"/>
    </location>
</feature>
<feature type="domain" description="Fibronectin type-III 5" evidence="5">
    <location>
        <begin position="989"/>
        <end position="1077"/>
    </location>
</feature>
<feature type="domain" description="Fibronectin type-III 6" evidence="5">
    <location>
        <begin position="1078"/>
        <end position="1165"/>
    </location>
</feature>
<feature type="domain" description="Fibronectin type-III 7" evidence="5">
    <location>
        <begin position="1167"/>
        <end position="1259"/>
    </location>
</feature>
<feature type="domain" description="Fibronectin type-III 8" evidence="5">
    <location>
        <begin position="1260"/>
        <end position="1348"/>
    </location>
</feature>
<feature type="domain" description="Fibronectin type-III 9" evidence="5">
    <location>
        <begin position="1349"/>
        <end position="1440"/>
    </location>
</feature>
<feature type="domain" description="Fibronectin type-III 10" evidence="5">
    <location>
        <begin position="1442"/>
        <end position="1530"/>
    </location>
</feature>
<feature type="domain" description="Fibronectin type-III 11" evidence="5">
    <location>
        <begin position="1531"/>
        <end position="1620"/>
    </location>
</feature>
<feature type="domain" description="Fibronectin type-III 12" evidence="5">
    <location>
        <begin position="1621"/>
        <end position="1710"/>
    </location>
</feature>
<feature type="domain" description="Fibronectin type-III 13" evidence="5">
    <location>
        <begin position="1711"/>
        <end position="1797"/>
    </location>
</feature>
<feature type="domain" description="Fibronectin type-III 14" evidence="5">
    <location>
        <begin position="1798"/>
        <end position="1886"/>
    </location>
</feature>
<feature type="domain" description="Fibrinogen C-terminal" evidence="6">
    <location>
        <begin position="1884"/>
        <end position="2099"/>
    </location>
</feature>
<feature type="region of interest" description="Disordered" evidence="7">
    <location>
        <begin position="69"/>
        <end position="91"/>
    </location>
</feature>
<feature type="coiled-coil region" evidence="3">
    <location>
        <begin position="118"/>
        <end position="142"/>
    </location>
</feature>
<feature type="compositionally biased region" description="Polar residues" evidence="7">
    <location>
        <begin position="80"/>
        <end position="89"/>
    </location>
</feature>
<feature type="modified residue" description="Phosphoserine" evidence="2">
    <location>
        <position position="65"/>
    </location>
</feature>
<feature type="modified residue" description="Phosphoserine" evidence="2">
    <location>
        <position position="70"/>
    </location>
</feature>
<feature type="modified residue" description="Phosphoserine" evidence="2">
    <location>
        <position position="72"/>
    </location>
</feature>
<feature type="modified residue" description="Phosphothreonine" evidence="2">
    <location>
        <position position="905"/>
    </location>
</feature>
<feature type="glycosylation site" description="N-linked (GlcNAc...) asparagine" evidence="3">
    <location>
        <position position="38"/>
    </location>
</feature>
<feature type="glycosylation site" description="O-linked (Xyl...) (chondroitin sulfate) serine" evidence="2">
    <location>
        <position position="72"/>
    </location>
</feature>
<feature type="glycosylation site" description="N-linked (GlcNAc...) asparagine" evidence="3">
    <location>
        <position position="166"/>
    </location>
</feature>
<feature type="glycosylation site" description="N-linked (GlcNAc...) asparagine" evidence="3">
    <location>
        <position position="184"/>
    </location>
</feature>
<feature type="glycosylation site" description="N-linked (GlcNAc...) asparagine" evidence="3">
    <location>
        <position position="327"/>
    </location>
</feature>
<feature type="glycosylation site" description="N-linked (GlcNAc...) asparagine" evidence="3">
    <location>
        <position position="788"/>
    </location>
</feature>
<feature type="glycosylation site" description="N-linked (GlcNAc...) asparagine" evidence="3">
    <location>
        <position position="1018"/>
    </location>
</feature>
<feature type="glycosylation site" description="N-linked (GlcNAc...) asparagine" evidence="3">
    <location>
        <position position="1079"/>
    </location>
</feature>
<feature type="glycosylation site" description="N-linked (GlcNAc...) asparagine" evidence="3">
    <location>
        <position position="1093"/>
    </location>
</feature>
<feature type="glycosylation site" description="N-linked (GlcNAc...) asparagine" evidence="3">
    <location>
        <position position="1119"/>
    </location>
</feature>
<feature type="glycosylation site" description="N-linked (GlcNAc...) asparagine" evidence="3">
    <location>
        <position position="1184"/>
    </location>
</feature>
<feature type="glycosylation site" description="N-linked (GlcNAc...) asparagine" evidence="3">
    <location>
        <position position="1210"/>
    </location>
</feature>
<feature type="glycosylation site" description="N-linked (GlcNAc...) asparagine" evidence="3">
    <location>
        <position position="1275"/>
    </location>
</feature>
<feature type="glycosylation site" description="N-linked (GlcNAc...) asparagine" evidence="3">
    <location>
        <position position="1301"/>
    </location>
</feature>
<feature type="glycosylation site" description="N-linked (GlcNAc...) asparagine" evidence="3">
    <location>
        <position position="1354"/>
    </location>
</feature>
<feature type="glycosylation site" description="N-linked (GlcNAc...) asparagine" evidence="3">
    <location>
        <position position="1364"/>
    </location>
</feature>
<feature type="glycosylation site" description="N-linked (GlcNAc...) asparagine" evidence="10">
    <location>
        <position position="1394"/>
    </location>
</feature>
<feature type="glycosylation site" description="N-linked (GlcNAc...) asparagine" evidence="3">
    <location>
        <position position="1443"/>
    </location>
</feature>
<feature type="glycosylation site" description="N-linked (GlcNAc...) asparagine" evidence="3">
    <location>
        <position position="1718"/>
    </location>
</feature>
<feature type="glycosylation site" description="N-linked (GlcNAc...) asparagine" evidence="3">
    <location>
        <position position="1969"/>
    </location>
</feature>
<feature type="glycosylation site" description="N-linked (GlcNAc...) asparagine" evidence="3">
    <location>
        <position position="2071"/>
    </location>
</feature>
<feature type="disulfide bond" evidence="3">
    <location>
        <begin position="190"/>
        <end position="200"/>
    </location>
</feature>
<feature type="disulfide bond" evidence="3">
    <location>
        <begin position="194"/>
        <end position="205"/>
    </location>
</feature>
<feature type="disulfide bond" evidence="3">
    <location>
        <begin position="207"/>
        <end position="216"/>
    </location>
</feature>
<feature type="disulfide bond" evidence="3">
    <location>
        <begin position="221"/>
        <end position="231"/>
    </location>
</feature>
<feature type="disulfide bond" evidence="3">
    <location>
        <begin position="225"/>
        <end position="236"/>
    </location>
</feature>
<feature type="disulfide bond" evidence="3">
    <location>
        <begin position="238"/>
        <end position="247"/>
    </location>
</feature>
<feature type="disulfide bond" evidence="3">
    <location>
        <begin position="252"/>
        <end position="263"/>
    </location>
</feature>
<feature type="disulfide bond" evidence="3">
    <location>
        <begin position="256"/>
        <end position="268"/>
    </location>
</feature>
<feature type="disulfide bond" evidence="3">
    <location>
        <begin position="270"/>
        <end position="279"/>
    </location>
</feature>
<feature type="disulfide bond" evidence="3">
    <location>
        <begin position="284"/>
        <end position="294"/>
    </location>
</feature>
<feature type="disulfide bond" evidence="3">
    <location>
        <begin position="288"/>
        <end position="299"/>
    </location>
</feature>
<feature type="disulfide bond" evidence="3">
    <location>
        <begin position="301"/>
        <end position="310"/>
    </location>
</feature>
<feature type="disulfide bond" evidence="3">
    <location>
        <begin position="315"/>
        <end position="325"/>
    </location>
</feature>
<feature type="disulfide bond" evidence="3">
    <location>
        <begin position="319"/>
        <end position="330"/>
    </location>
</feature>
<feature type="disulfide bond" evidence="3">
    <location>
        <begin position="332"/>
        <end position="341"/>
    </location>
</feature>
<feature type="disulfide bond" evidence="3">
    <location>
        <begin position="346"/>
        <end position="356"/>
    </location>
</feature>
<feature type="disulfide bond" evidence="3">
    <location>
        <begin position="350"/>
        <end position="361"/>
    </location>
</feature>
<feature type="disulfide bond" evidence="3">
    <location>
        <begin position="363"/>
        <end position="372"/>
    </location>
</feature>
<feature type="disulfide bond" evidence="3">
    <location>
        <begin position="377"/>
        <end position="387"/>
    </location>
</feature>
<feature type="disulfide bond" evidence="3">
    <location>
        <begin position="381"/>
        <end position="392"/>
    </location>
</feature>
<feature type="disulfide bond" evidence="3">
    <location>
        <begin position="394"/>
        <end position="403"/>
    </location>
</feature>
<feature type="disulfide bond" evidence="3">
    <location>
        <begin position="408"/>
        <end position="418"/>
    </location>
</feature>
<feature type="disulfide bond" evidence="3">
    <location>
        <begin position="412"/>
        <end position="423"/>
    </location>
</feature>
<feature type="disulfide bond" evidence="3">
    <location>
        <begin position="425"/>
        <end position="434"/>
    </location>
</feature>
<feature type="disulfide bond" evidence="3">
    <location>
        <begin position="439"/>
        <end position="449"/>
    </location>
</feature>
<feature type="disulfide bond" evidence="3">
    <location>
        <begin position="443"/>
        <end position="454"/>
    </location>
</feature>
<feature type="disulfide bond" evidence="3">
    <location>
        <begin position="456"/>
        <end position="465"/>
    </location>
</feature>
<feature type="disulfide bond" evidence="3">
    <location>
        <begin position="470"/>
        <end position="480"/>
    </location>
</feature>
<feature type="disulfide bond" evidence="3">
    <location>
        <begin position="474"/>
        <end position="485"/>
    </location>
</feature>
<feature type="disulfide bond" evidence="3">
    <location>
        <begin position="487"/>
        <end position="496"/>
    </location>
</feature>
<feature type="disulfide bond" evidence="3">
    <location>
        <begin position="501"/>
        <end position="511"/>
    </location>
</feature>
<feature type="disulfide bond" evidence="3">
    <location>
        <begin position="505"/>
        <end position="516"/>
    </location>
</feature>
<feature type="disulfide bond" evidence="3">
    <location>
        <begin position="518"/>
        <end position="527"/>
    </location>
</feature>
<feature type="disulfide bond" evidence="3">
    <location>
        <begin position="532"/>
        <end position="542"/>
    </location>
</feature>
<feature type="disulfide bond" evidence="3">
    <location>
        <begin position="536"/>
        <end position="547"/>
    </location>
</feature>
<feature type="disulfide bond" evidence="3">
    <location>
        <begin position="549"/>
        <end position="558"/>
    </location>
</feature>
<feature type="disulfide bond" evidence="3">
    <location>
        <begin position="563"/>
        <end position="573"/>
    </location>
</feature>
<feature type="disulfide bond" evidence="3">
    <location>
        <begin position="567"/>
        <end position="578"/>
    </location>
</feature>
<feature type="disulfide bond" evidence="3">
    <location>
        <begin position="580"/>
        <end position="589"/>
    </location>
</feature>
<feature type="disulfide bond" evidence="3">
    <location>
        <begin position="594"/>
        <end position="604"/>
    </location>
</feature>
<feature type="disulfide bond" evidence="3">
    <location>
        <begin position="598"/>
        <end position="609"/>
    </location>
</feature>
<feature type="disulfide bond" evidence="3">
    <location>
        <begin position="611"/>
        <end position="620"/>
    </location>
</feature>
<feature type="splice variant" id="VSP_052144" description="In isoform 5." evidence="14 15">
    <location>
        <begin position="1072"/>
        <end position="1616"/>
    </location>
</feature>
<feature type="splice variant" id="VSP_052145" description="In isoform 4." evidence="15">
    <location>
        <begin position="1163"/>
        <end position="1616"/>
    </location>
</feature>
<feature type="splice variant" id="VSP_052146" description="In isoform 3." evidence="15">
    <location>
        <begin position="1254"/>
        <end position="1616"/>
    </location>
</feature>
<feature type="splice variant" id="VSP_052147" description="In isoform 2." evidence="14 15">
    <location>
        <begin position="1436"/>
        <end position="1526"/>
    </location>
</feature>
<feature type="sequence conflict" description="In Ref. 2; CAA39751." evidence="16" ref="2">
    <original>D</original>
    <variation>E</variation>
    <location>
        <position position="202"/>
    </location>
</feature>
<feature type="sequence conflict" description="In Ref. 2; CAA39751." evidence="16" ref="2">
    <original>D</original>
    <variation>S</variation>
    <location>
        <position position="318"/>
    </location>
</feature>
<feature type="sequence conflict" description="In Ref. 2; CAA39751." evidence="16" ref="2">
    <original>Y</original>
    <variation>S</variation>
    <location>
        <position position="1019"/>
    </location>
</feature>
<feature type="sequence conflict" description="In Ref. 2; CAA39751." evidence="16" ref="2">
    <original>Q</original>
    <variation>H</variation>
    <location>
        <position position="1025"/>
    </location>
</feature>
<feature type="sequence conflict" description="In Ref. 2; CAA39751." evidence="16" ref="2">
    <original>G</original>
    <variation>S</variation>
    <location>
        <position position="1306"/>
    </location>
</feature>
<protein>
    <recommendedName>
        <fullName>Tenascin</fullName>
        <shortName>TN</shortName>
    </recommendedName>
    <alternativeName>
        <fullName>Hexabrachion</fullName>
    </alternativeName>
    <alternativeName>
        <fullName>Tenascin-C</fullName>
        <shortName>TN-C</shortName>
    </alternativeName>
</protein>
<keyword id="KW-0025">Alternative splicing</keyword>
<keyword id="KW-0130">Cell adhesion</keyword>
<keyword id="KW-0175">Coiled coil</keyword>
<keyword id="KW-1015">Disulfide bond</keyword>
<keyword id="KW-0245">EGF-like domain</keyword>
<keyword id="KW-0272">Extracellular matrix</keyword>
<keyword id="KW-0325">Glycoprotein</keyword>
<keyword id="KW-0597">Phosphoprotein</keyword>
<keyword id="KW-0654">Proteoglycan</keyword>
<keyword id="KW-1185">Reference proteome</keyword>
<keyword id="KW-0677">Repeat</keyword>
<keyword id="KW-0964">Secreted</keyword>
<keyword id="KW-0732">Signal</keyword>